<keyword id="KW-0963">Cytoplasm</keyword>
<keyword id="KW-0489">Methyltransferase</keyword>
<keyword id="KW-0694">RNA-binding</keyword>
<keyword id="KW-0698">rRNA processing</keyword>
<keyword id="KW-0949">S-adenosyl-L-methionine</keyword>
<keyword id="KW-0808">Transferase</keyword>
<comment type="function">
    <text evidence="1">Specifically dimethylates two adjacent adenosines (A1518 and A1519) in the loop of a conserved hairpin near the 3'-end of 16S rRNA in the 30S particle. May play a critical role in biogenesis of 30S subunits.</text>
</comment>
<comment type="catalytic activity">
    <reaction evidence="1">
        <text>adenosine(1518)/adenosine(1519) in 16S rRNA + 4 S-adenosyl-L-methionine = N(6)-dimethyladenosine(1518)/N(6)-dimethyladenosine(1519) in 16S rRNA + 4 S-adenosyl-L-homocysteine + 4 H(+)</text>
        <dbReference type="Rhea" id="RHEA:19609"/>
        <dbReference type="Rhea" id="RHEA-COMP:10232"/>
        <dbReference type="Rhea" id="RHEA-COMP:10233"/>
        <dbReference type="ChEBI" id="CHEBI:15378"/>
        <dbReference type="ChEBI" id="CHEBI:57856"/>
        <dbReference type="ChEBI" id="CHEBI:59789"/>
        <dbReference type="ChEBI" id="CHEBI:74411"/>
        <dbReference type="ChEBI" id="CHEBI:74493"/>
        <dbReference type="EC" id="2.1.1.182"/>
    </reaction>
</comment>
<comment type="subcellular location">
    <subcellularLocation>
        <location evidence="1">Cytoplasm</location>
    </subcellularLocation>
</comment>
<comment type="similarity">
    <text evidence="1">Belongs to the class I-like SAM-binding methyltransferase superfamily. rRNA adenine N(6)-methyltransferase family. RsmA subfamily.</text>
</comment>
<sequence length="272" mass="30458">MNNRVHQGHFARKRFGQNFLNDQFVIDSIVSAIHPVPGEAVVEIGPGLGALTEPVAARMDHMTVIELDRDLAARLASHPQLKDKLTIHQQDAMKVNFSELSEQAGQPLRVFGNLPYNISTPLMFHLFSYTDAIRDMHFMLQKEVVNRLVAGPNSKTYGRLTVMAQYYCNVIPVLEVPPTAFTPAPKVDSAVVRLIPHVQMPHPVGDVRMLSRITTQAFNQRRKTVRNSLGDLFTSEQLIELGIDPILRAENISVAQYCKLANWLSAQSTPQK</sequence>
<feature type="chain" id="PRO_0000257376" description="Ribosomal RNA small subunit methyltransferase A">
    <location>
        <begin position="1"/>
        <end position="272"/>
    </location>
</feature>
<feature type="binding site" evidence="1">
    <location>
        <position position="18"/>
    </location>
    <ligand>
        <name>S-adenosyl-L-methionine</name>
        <dbReference type="ChEBI" id="CHEBI:59789"/>
    </ligand>
</feature>
<feature type="binding site" evidence="1">
    <location>
        <position position="20"/>
    </location>
    <ligand>
        <name>S-adenosyl-L-methionine</name>
        <dbReference type="ChEBI" id="CHEBI:59789"/>
    </ligand>
</feature>
<feature type="binding site" evidence="1">
    <location>
        <position position="45"/>
    </location>
    <ligand>
        <name>S-adenosyl-L-methionine</name>
        <dbReference type="ChEBI" id="CHEBI:59789"/>
    </ligand>
</feature>
<feature type="binding site" evidence="1">
    <location>
        <position position="66"/>
    </location>
    <ligand>
        <name>S-adenosyl-L-methionine</name>
        <dbReference type="ChEBI" id="CHEBI:59789"/>
    </ligand>
</feature>
<feature type="binding site" evidence="1">
    <location>
        <position position="91"/>
    </location>
    <ligand>
        <name>S-adenosyl-L-methionine</name>
        <dbReference type="ChEBI" id="CHEBI:59789"/>
    </ligand>
</feature>
<feature type="binding site" evidence="1">
    <location>
        <position position="113"/>
    </location>
    <ligand>
        <name>S-adenosyl-L-methionine</name>
        <dbReference type="ChEBI" id="CHEBI:59789"/>
    </ligand>
</feature>
<evidence type="ECO:0000255" key="1">
    <source>
        <dbReference type="HAMAP-Rule" id="MF_00607"/>
    </source>
</evidence>
<name>RSMA_YERPA</name>
<accession>Q1C0H5</accession>
<protein>
    <recommendedName>
        <fullName evidence="1">Ribosomal RNA small subunit methyltransferase A</fullName>
        <ecNumber evidence="1">2.1.1.182</ecNumber>
    </recommendedName>
    <alternativeName>
        <fullName evidence="1">16S rRNA (adenine(1518)-N(6)/adenine(1519)-N(6))-dimethyltransferase</fullName>
    </alternativeName>
    <alternativeName>
        <fullName evidence="1">16S rRNA dimethyladenosine transferase</fullName>
    </alternativeName>
    <alternativeName>
        <fullName evidence="1">16S rRNA dimethylase</fullName>
    </alternativeName>
    <alternativeName>
        <fullName evidence="1">S-adenosylmethionine-6-N', N'-adenosyl(rRNA) dimethyltransferase</fullName>
    </alternativeName>
</protein>
<proteinExistence type="inferred from homology"/>
<dbReference type="EC" id="2.1.1.182" evidence="1"/>
<dbReference type="EMBL" id="CP000308">
    <property type="protein sequence ID" value="ABG16047.1"/>
    <property type="molecule type" value="Genomic_DNA"/>
</dbReference>
<dbReference type="RefSeq" id="WP_002210490.1">
    <property type="nucleotide sequence ID" value="NZ_CP009906.1"/>
</dbReference>
<dbReference type="SMR" id="Q1C0H5"/>
<dbReference type="GeneID" id="57974118"/>
<dbReference type="KEGG" id="ypa:YPA_4086"/>
<dbReference type="Proteomes" id="UP000001971">
    <property type="component" value="Chromosome"/>
</dbReference>
<dbReference type="GO" id="GO:0005829">
    <property type="term" value="C:cytosol"/>
    <property type="evidence" value="ECO:0007669"/>
    <property type="project" value="TreeGrafter"/>
</dbReference>
<dbReference type="GO" id="GO:0052908">
    <property type="term" value="F:16S rRNA (adenine(1518)-N(6)/adenine(1519)-N(6))-dimethyltransferase activity"/>
    <property type="evidence" value="ECO:0007669"/>
    <property type="project" value="UniProtKB-EC"/>
</dbReference>
<dbReference type="GO" id="GO:0003723">
    <property type="term" value="F:RNA binding"/>
    <property type="evidence" value="ECO:0007669"/>
    <property type="project" value="UniProtKB-KW"/>
</dbReference>
<dbReference type="CDD" id="cd02440">
    <property type="entry name" value="AdoMet_MTases"/>
    <property type="match status" value="1"/>
</dbReference>
<dbReference type="FunFam" id="1.10.8.100:FF:000001">
    <property type="entry name" value="Ribosomal RNA small subunit methyltransferase A"/>
    <property type="match status" value="1"/>
</dbReference>
<dbReference type="FunFam" id="3.40.50.150:FF:000006">
    <property type="entry name" value="Ribosomal RNA small subunit methyltransferase A"/>
    <property type="match status" value="1"/>
</dbReference>
<dbReference type="Gene3D" id="1.10.8.100">
    <property type="entry name" value="Ribosomal RNA adenine dimethylase-like, domain 2"/>
    <property type="match status" value="1"/>
</dbReference>
<dbReference type="Gene3D" id="3.40.50.150">
    <property type="entry name" value="Vaccinia Virus protein VP39"/>
    <property type="match status" value="1"/>
</dbReference>
<dbReference type="HAMAP" id="MF_00607">
    <property type="entry name" value="16SrRNA_methyltr_A"/>
    <property type="match status" value="1"/>
</dbReference>
<dbReference type="InterPro" id="IPR001737">
    <property type="entry name" value="KsgA/Erm"/>
</dbReference>
<dbReference type="InterPro" id="IPR023165">
    <property type="entry name" value="rRNA_Ade_diMease-like_C"/>
</dbReference>
<dbReference type="InterPro" id="IPR020596">
    <property type="entry name" value="rRNA_Ade_Mease_Trfase_CS"/>
</dbReference>
<dbReference type="InterPro" id="IPR020598">
    <property type="entry name" value="rRNA_Ade_methylase_Trfase_N"/>
</dbReference>
<dbReference type="InterPro" id="IPR011530">
    <property type="entry name" value="rRNA_adenine_dimethylase"/>
</dbReference>
<dbReference type="InterPro" id="IPR029063">
    <property type="entry name" value="SAM-dependent_MTases_sf"/>
</dbReference>
<dbReference type="NCBIfam" id="TIGR00755">
    <property type="entry name" value="ksgA"/>
    <property type="match status" value="1"/>
</dbReference>
<dbReference type="PANTHER" id="PTHR11727">
    <property type="entry name" value="DIMETHYLADENOSINE TRANSFERASE"/>
    <property type="match status" value="1"/>
</dbReference>
<dbReference type="PANTHER" id="PTHR11727:SF7">
    <property type="entry name" value="DIMETHYLADENOSINE TRANSFERASE-RELATED"/>
    <property type="match status" value="1"/>
</dbReference>
<dbReference type="Pfam" id="PF00398">
    <property type="entry name" value="RrnaAD"/>
    <property type="match status" value="1"/>
</dbReference>
<dbReference type="SMART" id="SM00650">
    <property type="entry name" value="rADc"/>
    <property type="match status" value="1"/>
</dbReference>
<dbReference type="SUPFAM" id="SSF53335">
    <property type="entry name" value="S-adenosyl-L-methionine-dependent methyltransferases"/>
    <property type="match status" value="1"/>
</dbReference>
<dbReference type="PROSITE" id="PS01131">
    <property type="entry name" value="RRNA_A_DIMETH"/>
    <property type="match status" value="1"/>
</dbReference>
<dbReference type="PROSITE" id="PS51689">
    <property type="entry name" value="SAM_RNA_A_N6_MT"/>
    <property type="match status" value="1"/>
</dbReference>
<reference key="1">
    <citation type="journal article" date="2006" name="J. Bacteriol.">
        <title>Complete genome sequence of Yersinia pestis strains Antiqua and Nepal516: evidence of gene reduction in an emerging pathogen.</title>
        <authorList>
            <person name="Chain P.S.G."/>
            <person name="Hu P."/>
            <person name="Malfatti S.A."/>
            <person name="Radnedge L."/>
            <person name="Larimer F."/>
            <person name="Vergez L.M."/>
            <person name="Worsham P."/>
            <person name="Chu M.C."/>
            <person name="Andersen G.L."/>
        </authorList>
    </citation>
    <scope>NUCLEOTIDE SEQUENCE [LARGE SCALE GENOMIC DNA]</scope>
    <source>
        <strain>Antiqua</strain>
    </source>
</reference>
<organism>
    <name type="scientific">Yersinia pestis bv. Antiqua (strain Antiqua)</name>
    <dbReference type="NCBI Taxonomy" id="360102"/>
    <lineage>
        <taxon>Bacteria</taxon>
        <taxon>Pseudomonadati</taxon>
        <taxon>Pseudomonadota</taxon>
        <taxon>Gammaproteobacteria</taxon>
        <taxon>Enterobacterales</taxon>
        <taxon>Yersiniaceae</taxon>
        <taxon>Yersinia</taxon>
    </lineage>
</organism>
<gene>
    <name evidence="1" type="primary">rsmA</name>
    <name evidence="1" type="synonym">ksgA</name>
    <name type="ordered locus">YPA_4086</name>
</gene>